<comment type="function">
    <text evidence="1">May negatively regulate the snf1 kinase.</text>
</comment>
<comment type="subcellular location">
    <subcellularLocation>
        <location evidence="1">Cytoplasm</location>
    </subcellularLocation>
</comment>
<comment type="similarity">
    <text evidence="4">Belongs to the SIP5 family.</text>
</comment>
<organism>
    <name type="scientific">Schizosaccharomyces pombe (strain 972 / ATCC 24843)</name>
    <name type="common">Fission yeast</name>
    <dbReference type="NCBI Taxonomy" id="284812"/>
    <lineage>
        <taxon>Eukaryota</taxon>
        <taxon>Fungi</taxon>
        <taxon>Dikarya</taxon>
        <taxon>Ascomycota</taxon>
        <taxon>Taphrinomycotina</taxon>
        <taxon>Schizosaccharomycetes</taxon>
        <taxon>Schizosaccharomycetales</taxon>
        <taxon>Schizosaccharomycetaceae</taxon>
        <taxon>Schizosaccharomyces</taxon>
    </lineage>
</organism>
<evidence type="ECO:0000250" key="1"/>
<evidence type="ECO:0000256" key="2">
    <source>
        <dbReference type="SAM" id="MobiDB-lite"/>
    </source>
</evidence>
<evidence type="ECO:0000269" key="3">
    <source>
    </source>
</evidence>
<evidence type="ECO:0000305" key="4"/>
<sequence>MGNTIGKERQENDEELIQHLVQLVDGGFLDPQGVYSSAPAYKTNIVRKLMLERRLMPFYKGLDSYSKDWPADKVVEVVEKALGPHKSALLHCAIRQSRSLSVGNTRSLKRDSRGSSDHLLTRNRSNSTPGSISADYRTTAITTIYANAMECPICFLYYPSNFNYTRCCAQPICSECFVEIRRAEPHLPTVHANEPTPNEFDLISEPAKCPYCMTERFGVIYKPNPKLTPFSFNNNPDTLPSNIAPMGTLSKSSLPLHHIPWPPNQHIKFAHDDKNVVSTDFIHPDWQYKLERARRRALRRAANATLLNSHLLETGPANANANHNTDLSHDPTSHGGPRRTLSSRRQHYLANVEQLMLAEAIRQSLLDAQSNDSTNSLPSTEVSQPDSTNISNEQEIVQPQPTHTTNVALVEEINRPDSVESAITASSSIDTGNENETQEVNSDSLPQFVHQTMTQTNFQESSPSVAADETRVHNVDEYIEQQDLDELIHSPIASTNPFLADQFARSETVDLNAHICSPALSVSDDGVTATNKTQSSFPSVYEHQLKSNELERGH</sequence>
<reference key="1">
    <citation type="journal article" date="2002" name="Nature">
        <title>The genome sequence of Schizosaccharomyces pombe.</title>
        <authorList>
            <person name="Wood V."/>
            <person name="Gwilliam R."/>
            <person name="Rajandream M.A."/>
            <person name="Lyne M.H."/>
            <person name="Lyne R."/>
            <person name="Stewart A."/>
            <person name="Sgouros J.G."/>
            <person name="Peat N."/>
            <person name="Hayles J."/>
            <person name="Baker S.G."/>
            <person name="Basham D."/>
            <person name="Bowman S."/>
            <person name="Brooks K."/>
            <person name="Brown D."/>
            <person name="Brown S."/>
            <person name="Chillingworth T."/>
            <person name="Churcher C.M."/>
            <person name="Collins M."/>
            <person name="Connor R."/>
            <person name="Cronin A."/>
            <person name="Davis P."/>
            <person name="Feltwell T."/>
            <person name="Fraser A."/>
            <person name="Gentles S."/>
            <person name="Goble A."/>
            <person name="Hamlin N."/>
            <person name="Harris D.E."/>
            <person name="Hidalgo J."/>
            <person name="Hodgson G."/>
            <person name="Holroyd S."/>
            <person name="Hornsby T."/>
            <person name="Howarth S."/>
            <person name="Huckle E.J."/>
            <person name="Hunt S."/>
            <person name="Jagels K."/>
            <person name="James K.D."/>
            <person name="Jones L."/>
            <person name="Jones M."/>
            <person name="Leather S."/>
            <person name="McDonald S."/>
            <person name="McLean J."/>
            <person name="Mooney P."/>
            <person name="Moule S."/>
            <person name="Mungall K.L."/>
            <person name="Murphy L.D."/>
            <person name="Niblett D."/>
            <person name="Odell C."/>
            <person name="Oliver K."/>
            <person name="O'Neil S."/>
            <person name="Pearson D."/>
            <person name="Quail M.A."/>
            <person name="Rabbinowitsch E."/>
            <person name="Rutherford K.M."/>
            <person name="Rutter S."/>
            <person name="Saunders D."/>
            <person name="Seeger K."/>
            <person name="Sharp S."/>
            <person name="Skelton J."/>
            <person name="Simmonds M.N."/>
            <person name="Squares R."/>
            <person name="Squares S."/>
            <person name="Stevens K."/>
            <person name="Taylor K."/>
            <person name="Taylor R.G."/>
            <person name="Tivey A."/>
            <person name="Walsh S.V."/>
            <person name="Warren T."/>
            <person name="Whitehead S."/>
            <person name="Woodward J.R."/>
            <person name="Volckaert G."/>
            <person name="Aert R."/>
            <person name="Robben J."/>
            <person name="Grymonprez B."/>
            <person name="Weltjens I."/>
            <person name="Vanstreels E."/>
            <person name="Rieger M."/>
            <person name="Schaefer M."/>
            <person name="Mueller-Auer S."/>
            <person name="Gabel C."/>
            <person name="Fuchs M."/>
            <person name="Duesterhoeft A."/>
            <person name="Fritzc C."/>
            <person name="Holzer E."/>
            <person name="Moestl D."/>
            <person name="Hilbert H."/>
            <person name="Borzym K."/>
            <person name="Langer I."/>
            <person name="Beck A."/>
            <person name="Lehrach H."/>
            <person name="Reinhardt R."/>
            <person name="Pohl T.M."/>
            <person name="Eger P."/>
            <person name="Zimmermann W."/>
            <person name="Wedler H."/>
            <person name="Wambutt R."/>
            <person name="Purnelle B."/>
            <person name="Goffeau A."/>
            <person name="Cadieu E."/>
            <person name="Dreano S."/>
            <person name="Gloux S."/>
            <person name="Lelaure V."/>
            <person name="Mottier S."/>
            <person name="Galibert F."/>
            <person name="Aves S.J."/>
            <person name="Xiang Z."/>
            <person name="Hunt C."/>
            <person name="Moore K."/>
            <person name="Hurst S.M."/>
            <person name="Lucas M."/>
            <person name="Rochet M."/>
            <person name="Gaillardin C."/>
            <person name="Tallada V.A."/>
            <person name="Garzon A."/>
            <person name="Thode G."/>
            <person name="Daga R.R."/>
            <person name="Cruzado L."/>
            <person name="Jimenez J."/>
            <person name="Sanchez M."/>
            <person name="del Rey F."/>
            <person name="Benito J."/>
            <person name="Dominguez A."/>
            <person name="Revuelta J.L."/>
            <person name="Moreno S."/>
            <person name="Armstrong J."/>
            <person name="Forsburg S.L."/>
            <person name="Cerutti L."/>
            <person name="Lowe T."/>
            <person name="McCombie W.R."/>
            <person name="Paulsen I."/>
            <person name="Potashkin J."/>
            <person name="Shpakovski G.V."/>
            <person name="Ussery D."/>
            <person name="Barrell B.G."/>
            <person name="Nurse P."/>
        </authorList>
    </citation>
    <scope>NUCLEOTIDE SEQUENCE [LARGE SCALE GENOMIC DNA]</scope>
    <source>
        <strain>972 / ATCC 24843</strain>
    </source>
</reference>
<reference key="2">
    <citation type="journal article" date="2008" name="J. Proteome Res.">
        <title>Phosphoproteome analysis of fission yeast.</title>
        <authorList>
            <person name="Wilson-Grady J.T."/>
            <person name="Villen J."/>
            <person name="Gygi S.P."/>
        </authorList>
    </citation>
    <scope>PHOSPHORYLATION [LARGE SCALE ANALYSIS] AT SER-127 AND THR-128</scope>
    <scope>IDENTIFICATION BY MASS SPECTROMETRY</scope>
</reference>
<name>SIP5_SCHPO</name>
<keyword id="KW-0963">Cytoplasm</keyword>
<keyword id="KW-0597">Phosphoprotein</keyword>
<keyword id="KW-1185">Reference proteome</keyword>
<protein>
    <recommendedName>
        <fullName>Protein sip5</fullName>
    </recommendedName>
</protein>
<feature type="chain" id="PRO_0000333442" description="Protein sip5">
    <location>
        <begin position="1"/>
        <end position="554"/>
    </location>
</feature>
<feature type="region of interest" description="Disordered" evidence="2">
    <location>
        <begin position="103"/>
        <end position="132"/>
    </location>
</feature>
<feature type="region of interest" description="Disordered" evidence="2">
    <location>
        <begin position="314"/>
        <end position="343"/>
    </location>
</feature>
<feature type="region of interest" description="Disordered" evidence="2">
    <location>
        <begin position="369"/>
        <end position="403"/>
    </location>
</feature>
<feature type="region of interest" description="Disordered" evidence="2">
    <location>
        <begin position="523"/>
        <end position="554"/>
    </location>
</feature>
<feature type="compositionally biased region" description="Basic and acidic residues" evidence="2">
    <location>
        <begin position="108"/>
        <end position="120"/>
    </location>
</feature>
<feature type="compositionally biased region" description="Polar residues" evidence="2">
    <location>
        <begin position="122"/>
        <end position="131"/>
    </location>
</feature>
<feature type="compositionally biased region" description="Polar residues" evidence="2">
    <location>
        <begin position="528"/>
        <end position="538"/>
    </location>
</feature>
<feature type="compositionally biased region" description="Basic and acidic residues" evidence="2">
    <location>
        <begin position="543"/>
        <end position="554"/>
    </location>
</feature>
<feature type="modified residue" description="Phosphoserine" evidence="3">
    <location>
        <position position="127"/>
    </location>
</feature>
<feature type="modified residue" description="Phosphothreonine" evidence="3">
    <location>
        <position position="128"/>
    </location>
</feature>
<gene>
    <name type="primary">sip5</name>
    <name type="ORF">SPBC25B2.03</name>
</gene>
<dbReference type="EMBL" id="CU329671">
    <property type="protein sequence ID" value="CAA21261.1"/>
    <property type="molecule type" value="Genomic_DNA"/>
</dbReference>
<dbReference type="PIR" id="T39979">
    <property type="entry name" value="T39979"/>
</dbReference>
<dbReference type="RefSeq" id="NP_596071.1">
    <property type="nucleotide sequence ID" value="NM_001021983.2"/>
</dbReference>
<dbReference type="BioGRID" id="276963">
    <property type="interactions" value="7"/>
</dbReference>
<dbReference type="FunCoup" id="O74775">
    <property type="interactions" value="7"/>
</dbReference>
<dbReference type="STRING" id="284812.O74775"/>
<dbReference type="iPTMnet" id="O74775"/>
<dbReference type="PaxDb" id="4896-SPBC25B2.03.1"/>
<dbReference type="EnsemblFungi" id="SPBC25B2.03.1">
    <property type="protein sequence ID" value="SPBC25B2.03.1:pep"/>
    <property type="gene ID" value="SPBC25B2.03"/>
</dbReference>
<dbReference type="KEGG" id="spo:2540435"/>
<dbReference type="PomBase" id="SPBC25B2.03"/>
<dbReference type="VEuPathDB" id="FungiDB:SPBC25B2.03"/>
<dbReference type="eggNOG" id="KOG2789">
    <property type="taxonomic scope" value="Eukaryota"/>
</dbReference>
<dbReference type="HOGENOM" id="CLU_492714_0_0_1"/>
<dbReference type="InParanoid" id="O74775"/>
<dbReference type="OMA" id="ENHEYSE"/>
<dbReference type="PhylomeDB" id="O74775"/>
<dbReference type="PRO" id="PR:O74775"/>
<dbReference type="Proteomes" id="UP000002485">
    <property type="component" value="Chromosome II"/>
</dbReference>
<dbReference type="GO" id="GO:0005783">
    <property type="term" value="C:endoplasmic reticulum"/>
    <property type="evidence" value="ECO:0007005"/>
    <property type="project" value="PomBase"/>
</dbReference>
<dbReference type="GO" id="GO:0000329">
    <property type="term" value="C:fungal-type vacuole membrane"/>
    <property type="evidence" value="ECO:0007005"/>
    <property type="project" value="PomBase"/>
</dbReference>
<dbReference type="GO" id="GO:0005794">
    <property type="term" value="C:Golgi apparatus"/>
    <property type="evidence" value="ECO:0007005"/>
    <property type="project" value="PomBase"/>
</dbReference>
<dbReference type="GO" id="GO:0061659">
    <property type="term" value="F:ubiquitin-like protein ligase activity"/>
    <property type="evidence" value="ECO:0000255"/>
    <property type="project" value="PomBase"/>
</dbReference>
<dbReference type="CDD" id="cd24139">
    <property type="entry name" value="SIP5-like"/>
    <property type="match status" value="1"/>
</dbReference>
<dbReference type="InterPro" id="IPR039301">
    <property type="entry name" value="Sip5/DA2"/>
</dbReference>
<dbReference type="InterPro" id="IPR013087">
    <property type="entry name" value="Znf_C2H2_type"/>
</dbReference>
<dbReference type="PANTHER" id="PTHR31315">
    <property type="entry name" value="PROTEIN SIP5"/>
    <property type="match status" value="1"/>
</dbReference>
<dbReference type="PANTHER" id="PTHR31315:SF1">
    <property type="entry name" value="PROTEIN SIP5"/>
    <property type="match status" value="1"/>
</dbReference>
<proteinExistence type="evidence at protein level"/>
<accession>O74775</accession>